<name>BCCIP_XENTR</name>
<organism>
    <name type="scientific">Xenopus tropicalis</name>
    <name type="common">Western clawed frog</name>
    <name type="synonym">Silurana tropicalis</name>
    <dbReference type="NCBI Taxonomy" id="8364"/>
    <lineage>
        <taxon>Eukaryota</taxon>
        <taxon>Metazoa</taxon>
        <taxon>Chordata</taxon>
        <taxon>Craniata</taxon>
        <taxon>Vertebrata</taxon>
        <taxon>Euteleostomi</taxon>
        <taxon>Amphibia</taxon>
        <taxon>Batrachia</taxon>
        <taxon>Anura</taxon>
        <taxon>Pipoidea</taxon>
        <taxon>Pipidae</taxon>
        <taxon>Xenopodinae</taxon>
        <taxon>Xenopus</taxon>
        <taxon>Silurana</taxon>
    </lineage>
</organism>
<comment type="function">
    <text evidence="1">During interphase, required for microtubule organizing and anchoring activities. During mitosis, required for the organization and stabilization of the spindle pole. May promote cell cycle arrest and DNA repair.</text>
</comment>
<comment type="subcellular location">
    <subcellularLocation>
        <location evidence="1">Nucleus</location>
    </subcellularLocation>
    <subcellularLocation>
        <location evidence="1">Cytoplasm</location>
        <location evidence="1">Cytoskeleton</location>
        <location evidence="1">Microtubule organizing center</location>
        <location evidence="1">Centrosome</location>
        <location evidence="1">Centriole</location>
    </subcellularLocation>
    <subcellularLocation>
        <location evidence="1">Cytoplasm</location>
        <location evidence="1">Cytoskeleton</location>
        <location evidence="1">Spindle pole</location>
    </subcellularLocation>
</comment>
<comment type="similarity">
    <text evidence="3">Belongs to the BCP1 family.</text>
</comment>
<gene>
    <name type="primary">bccip</name>
    <name type="ORF">TNeu080f16.1</name>
</gene>
<protein>
    <recommendedName>
        <fullName>Protein BCCIP homolog</fullName>
    </recommendedName>
</protein>
<reference key="1">
    <citation type="submission" date="2006-06" db="EMBL/GenBank/DDBJ databases">
        <authorList>
            <consortium name="Sanger Xenopus tropicalis EST/cDNA project"/>
        </authorList>
    </citation>
    <scope>NUCLEOTIDE SEQUENCE [LARGE SCALE MRNA]</scope>
    <source>
        <tissue>Neurula</tissue>
    </source>
</reference>
<reference key="2">
    <citation type="submission" date="2004-06" db="EMBL/GenBank/DDBJ databases">
        <authorList>
            <consortium name="NIH - Xenopus Gene Collection (XGC) project"/>
        </authorList>
    </citation>
    <scope>NUCLEOTIDE SEQUENCE [LARGE SCALE MRNA]</scope>
    <source>
        <tissue>Embryo</tissue>
    </source>
</reference>
<feature type="chain" id="PRO_0000249691" description="Protein BCCIP homolog">
    <location>
        <begin position="1"/>
        <end position="310"/>
    </location>
</feature>
<feature type="region of interest" description="Disordered" evidence="2">
    <location>
        <begin position="1"/>
        <end position="59"/>
    </location>
</feature>
<feature type="compositionally biased region" description="Basic and acidic residues" evidence="2">
    <location>
        <begin position="8"/>
        <end position="18"/>
    </location>
</feature>
<feature type="compositionally biased region" description="Acidic residues" evidence="2">
    <location>
        <begin position="19"/>
        <end position="54"/>
    </location>
</feature>
<proteinExistence type="evidence at transcript level"/>
<accession>Q6GL92</accession>
<dbReference type="EMBL" id="CR760265">
    <property type="protein sequence ID" value="CAJ83280.1"/>
    <property type="molecule type" value="mRNA"/>
</dbReference>
<dbReference type="EMBL" id="BC074611">
    <property type="protein sequence ID" value="AAH74611.1"/>
    <property type="molecule type" value="mRNA"/>
</dbReference>
<dbReference type="EMBL" id="BC075480">
    <property type="protein sequence ID" value="AAH75480.1"/>
    <property type="molecule type" value="mRNA"/>
</dbReference>
<dbReference type="RefSeq" id="NP_001004968.1">
    <property type="nucleotide sequence ID" value="NM_001004968.1"/>
</dbReference>
<dbReference type="SMR" id="Q6GL92"/>
<dbReference type="FunCoup" id="Q6GL92">
    <property type="interactions" value="2793"/>
</dbReference>
<dbReference type="STRING" id="8364.ENSXETP00000054349"/>
<dbReference type="PaxDb" id="8364-ENSXETP00000053943"/>
<dbReference type="DNASU" id="448392"/>
<dbReference type="GeneID" id="448392"/>
<dbReference type="KEGG" id="xtr:448392"/>
<dbReference type="AGR" id="Xenbase:XB-GENE-492140"/>
<dbReference type="CTD" id="56647"/>
<dbReference type="Xenbase" id="XB-GENE-492140">
    <property type="gene designation" value="bccip"/>
</dbReference>
<dbReference type="eggNOG" id="KOG3034">
    <property type="taxonomic scope" value="Eukaryota"/>
</dbReference>
<dbReference type="HOGENOM" id="CLU_068770_1_1_1"/>
<dbReference type="InParanoid" id="Q6GL92"/>
<dbReference type="OMA" id="VKFYRKE"/>
<dbReference type="OrthoDB" id="27543at2759"/>
<dbReference type="Proteomes" id="UP000008143">
    <property type="component" value="Chromosome 7"/>
</dbReference>
<dbReference type="Bgee" id="ENSXETG00000025198">
    <property type="expression patterns" value="Expressed in liver and 16 other cell types or tissues"/>
</dbReference>
<dbReference type="ExpressionAtlas" id="Q6GL92">
    <property type="expression patterns" value="differential"/>
</dbReference>
<dbReference type="GO" id="GO:0005814">
    <property type="term" value="C:centriole"/>
    <property type="evidence" value="ECO:0000250"/>
    <property type="project" value="UniProtKB"/>
</dbReference>
<dbReference type="GO" id="GO:0005813">
    <property type="term" value="C:centrosome"/>
    <property type="evidence" value="ECO:0000250"/>
    <property type="project" value="UniProtKB"/>
</dbReference>
<dbReference type="GO" id="GO:0005737">
    <property type="term" value="C:cytoplasm"/>
    <property type="evidence" value="ECO:0007669"/>
    <property type="project" value="UniProtKB-KW"/>
</dbReference>
<dbReference type="GO" id="GO:0097431">
    <property type="term" value="C:mitotic spindle pole"/>
    <property type="evidence" value="ECO:0000250"/>
    <property type="project" value="UniProtKB"/>
</dbReference>
<dbReference type="GO" id="GO:0005634">
    <property type="term" value="C:nucleus"/>
    <property type="evidence" value="ECO:0007669"/>
    <property type="project" value="UniProtKB-SubCell"/>
</dbReference>
<dbReference type="GO" id="GO:0006281">
    <property type="term" value="P:DNA repair"/>
    <property type="evidence" value="ECO:0007669"/>
    <property type="project" value="UniProtKB-KW"/>
</dbReference>
<dbReference type="GO" id="GO:0034453">
    <property type="term" value="P:microtubule anchoring"/>
    <property type="evidence" value="ECO:0000250"/>
    <property type="project" value="UniProtKB"/>
</dbReference>
<dbReference type="GO" id="GO:0000226">
    <property type="term" value="P:microtubule cytoskeleton organization"/>
    <property type="evidence" value="ECO:0000250"/>
    <property type="project" value="UniProtKB"/>
</dbReference>
<dbReference type="GO" id="GO:0090307">
    <property type="term" value="P:mitotic spindle assembly"/>
    <property type="evidence" value="ECO:0000250"/>
    <property type="project" value="UniProtKB"/>
</dbReference>
<dbReference type="GO" id="GO:0007052">
    <property type="term" value="P:mitotic spindle organization"/>
    <property type="evidence" value="ECO:0000250"/>
    <property type="project" value="UniProtKB"/>
</dbReference>
<dbReference type="InterPro" id="IPR025602">
    <property type="entry name" value="BCP1_family"/>
</dbReference>
<dbReference type="PANTHER" id="PTHR13261">
    <property type="entry name" value="BRCA2 AND CDKN1A INTERACTING PROTEIN"/>
    <property type="match status" value="1"/>
</dbReference>
<dbReference type="PANTHER" id="PTHR13261:SF0">
    <property type="entry name" value="BRCA2 AND CDKN1A-INTERACTING PROTEIN"/>
    <property type="match status" value="1"/>
</dbReference>
<dbReference type="Pfam" id="PF13862">
    <property type="entry name" value="BCCIP"/>
    <property type="match status" value="1"/>
</dbReference>
<dbReference type="PIRSF" id="PIRSF028983">
    <property type="entry name" value="BCP1"/>
    <property type="match status" value="1"/>
</dbReference>
<keyword id="KW-0131">Cell cycle</keyword>
<keyword id="KW-0963">Cytoplasm</keyword>
<keyword id="KW-0206">Cytoskeleton</keyword>
<keyword id="KW-0227">DNA damage</keyword>
<keyword id="KW-0234">DNA repair</keyword>
<keyword id="KW-0539">Nucleus</keyword>
<keyword id="KW-1185">Reference proteome</keyword>
<evidence type="ECO:0000250" key="1">
    <source>
        <dbReference type="UniProtKB" id="Q9P287"/>
    </source>
</evidence>
<evidence type="ECO:0000256" key="2">
    <source>
        <dbReference type="SAM" id="MobiDB-lite"/>
    </source>
</evidence>
<evidence type="ECO:0000305" key="3"/>
<sequence length="310" mass="35488">MASNAKRRALEPERLPERNEEEEDDMEGDNSDESDDIEDDESEEEEEVNEEVNIDFEAYTISDTDSEGIKKLLKQLFLKAHVNISELTDLLIQQNHIGSAIKQAESQEDSDDDDDDDVDHVFGFISLVNLTERKGTSCVEQIKELILTRCEENCEQSMVEQFDKVLNNNSKPVGFLLSERFINVPAQIALPMHQQLQKELADTQRTNKPCGKCYYYLILSKTFVEAAKTSKGRVGSQAKEELMFANAEDEFFYEKALLKFSYSVQEESDTQLGGRWSFSDVPMKPLRTVMLVPADRMNSIMDKFKEYLSV</sequence>